<feature type="chain" id="PRO_0000079608" description="Pre-mRNA-splicing factor CWC26">
    <location>
        <begin position="1"/>
        <end position="339"/>
    </location>
</feature>
<feature type="region of interest" description="Disordered" evidence="3">
    <location>
        <begin position="34"/>
        <end position="195"/>
    </location>
</feature>
<feature type="coiled-coil region" evidence="2">
    <location>
        <begin position="197"/>
        <end position="222"/>
    </location>
</feature>
<feature type="compositionally biased region" description="Low complexity" evidence="3">
    <location>
        <begin position="109"/>
        <end position="124"/>
    </location>
</feature>
<feature type="compositionally biased region" description="Basic and acidic residues" evidence="3">
    <location>
        <begin position="136"/>
        <end position="156"/>
    </location>
</feature>
<protein>
    <recommendedName>
        <fullName>Pre-mRNA-splicing factor CWC26</fullName>
    </recommendedName>
</protein>
<dbReference type="EMBL" id="CM003140">
    <property type="protein sequence ID" value="KIS71756.1"/>
    <property type="molecule type" value="Genomic_DNA"/>
</dbReference>
<dbReference type="RefSeq" id="XP_011386130.1">
    <property type="nucleotide sequence ID" value="XM_011387828.1"/>
</dbReference>
<dbReference type="SMR" id="Q4PI72"/>
<dbReference type="STRING" id="237631.Q4PI72"/>
<dbReference type="EnsemblFungi" id="KIS71756">
    <property type="protein sequence ID" value="KIS71756"/>
    <property type="gene ID" value="UMAG_00191"/>
</dbReference>
<dbReference type="GeneID" id="23561563"/>
<dbReference type="KEGG" id="uma:UMAG_00191"/>
<dbReference type="VEuPathDB" id="FungiDB:UMAG_00191"/>
<dbReference type="eggNOG" id="KOG2654">
    <property type="taxonomic scope" value="Eukaryota"/>
</dbReference>
<dbReference type="HOGENOM" id="CLU_024195_0_1_1"/>
<dbReference type="InParanoid" id="Q4PI72"/>
<dbReference type="OMA" id="WATIREP"/>
<dbReference type="OrthoDB" id="6022at2759"/>
<dbReference type="Proteomes" id="UP000000561">
    <property type="component" value="Chromosome 1"/>
</dbReference>
<dbReference type="GO" id="GO:0005737">
    <property type="term" value="C:cytoplasm"/>
    <property type="evidence" value="ECO:0007669"/>
    <property type="project" value="UniProtKB-SubCell"/>
</dbReference>
<dbReference type="GO" id="GO:0005684">
    <property type="term" value="C:U2-type spliceosomal complex"/>
    <property type="evidence" value="ECO:0000318"/>
    <property type="project" value="GO_Central"/>
</dbReference>
<dbReference type="GO" id="GO:0000398">
    <property type="term" value="P:mRNA splicing, via spliceosome"/>
    <property type="evidence" value="ECO:0000318"/>
    <property type="project" value="GO_Central"/>
</dbReference>
<dbReference type="InterPro" id="IPR018609">
    <property type="entry name" value="Bud13"/>
</dbReference>
<dbReference type="InterPro" id="IPR051112">
    <property type="entry name" value="CWC26_splicing_factor"/>
</dbReference>
<dbReference type="PANTHER" id="PTHR31809">
    <property type="entry name" value="BUD13 HOMOLOG"/>
    <property type="match status" value="1"/>
</dbReference>
<dbReference type="PANTHER" id="PTHR31809:SF0">
    <property type="entry name" value="BUD13 HOMOLOG"/>
    <property type="match status" value="1"/>
</dbReference>
<dbReference type="Pfam" id="PF09736">
    <property type="entry name" value="Bud13"/>
    <property type="match status" value="1"/>
</dbReference>
<proteinExistence type="inferred from homology"/>
<keyword id="KW-0175">Coiled coil</keyword>
<keyword id="KW-0963">Cytoplasm</keyword>
<keyword id="KW-0507">mRNA processing</keyword>
<keyword id="KW-0508">mRNA splicing</keyword>
<keyword id="KW-0539">Nucleus</keyword>
<keyword id="KW-1185">Reference proteome</keyword>
<keyword id="KW-0747">Spliceosome</keyword>
<comment type="function">
    <text evidence="1">Involved in pre-mRNA splicing.</text>
</comment>
<comment type="subunit">
    <text evidence="1">Associated with the spliceosome.</text>
</comment>
<comment type="subcellular location">
    <subcellularLocation>
        <location evidence="1">Cytoplasm</location>
    </subcellularLocation>
    <subcellularLocation>
        <location evidence="1">Nucleus</location>
    </subcellularLocation>
</comment>
<comment type="similarity">
    <text evidence="4">Belongs to the CWC26 family.</text>
</comment>
<name>CWC26_MYCMD</name>
<sequence>MPDPKLQSYIAAHYLSGPKADAILARASSSDIKVKRKKKKVKTDDASRVSSSSGLVFKDDSDTWKTPAEDDEDDGGLTPQVVDGADGQSLNKTFRKIGSASHGAKEAGTSDTASMSTPTPAPTSVEEPTEFKAGLRTRDEMKAARLAREERKKREAASLSVDVSMASSTPAANDDDDQEARLAQQTVYRDSSGRIIDLNAQQAEQERLERLRLEKQAERNTWSQGLVQKQQRQQAAAQLAAVQQQGIARRATDNEYNEYFKQQQRVDDPAMAFLTKKRSAGPSMPKYKGGWPPNRFNIPPGYRWDGVDRGNGYEKAFFERKAQLETRELQARAWGQSDM</sequence>
<reference key="1">
    <citation type="journal article" date="2006" name="Nature">
        <title>Insights from the genome of the biotrophic fungal plant pathogen Ustilago maydis.</title>
        <authorList>
            <person name="Kaemper J."/>
            <person name="Kahmann R."/>
            <person name="Boelker M."/>
            <person name="Ma L.-J."/>
            <person name="Brefort T."/>
            <person name="Saville B.J."/>
            <person name="Banuett F."/>
            <person name="Kronstad J.W."/>
            <person name="Gold S.E."/>
            <person name="Mueller O."/>
            <person name="Perlin M.H."/>
            <person name="Woesten H.A.B."/>
            <person name="de Vries R."/>
            <person name="Ruiz-Herrera J."/>
            <person name="Reynaga-Pena C.G."/>
            <person name="Snetselaar K."/>
            <person name="McCann M."/>
            <person name="Perez-Martin J."/>
            <person name="Feldbruegge M."/>
            <person name="Basse C.W."/>
            <person name="Steinberg G."/>
            <person name="Ibeas J.I."/>
            <person name="Holloman W."/>
            <person name="Guzman P."/>
            <person name="Farman M.L."/>
            <person name="Stajich J.E."/>
            <person name="Sentandreu R."/>
            <person name="Gonzalez-Prieto J.M."/>
            <person name="Kennell J.C."/>
            <person name="Molina L."/>
            <person name="Schirawski J."/>
            <person name="Mendoza-Mendoza A."/>
            <person name="Greilinger D."/>
            <person name="Muench K."/>
            <person name="Roessel N."/>
            <person name="Scherer M."/>
            <person name="Vranes M."/>
            <person name="Ladendorf O."/>
            <person name="Vincon V."/>
            <person name="Fuchs U."/>
            <person name="Sandrock B."/>
            <person name="Meng S."/>
            <person name="Ho E.C.H."/>
            <person name="Cahill M.J."/>
            <person name="Boyce K.J."/>
            <person name="Klose J."/>
            <person name="Klosterman S.J."/>
            <person name="Deelstra H.J."/>
            <person name="Ortiz-Castellanos L."/>
            <person name="Li W."/>
            <person name="Sanchez-Alonso P."/>
            <person name="Schreier P.H."/>
            <person name="Haeuser-Hahn I."/>
            <person name="Vaupel M."/>
            <person name="Koopmann E."/>
            <person name="Friedrich G."/>
            <person name="Voss H."/>
            <person name="Schlueter T."/>
            <person name="Margolis J."/>
            <person name="Platt D."/>
            <person name="Swimmer C."/>
            <person name="Gnirke A."/>
            <person name="Chen F."/>
            <person name="Vysotskaia V."/>
            <person name="Mannhaupt G."/>
            <person name="Gueldener U."/>
            <person name="Muensterkoetter M."/>
            <person name="Haase D."/>
            <person name="Oesterheld M."/>
            <person name="Mewes H.-W."/>
            <person name="Mauceli E.W."/>
            <person name="DeCaprio D."/>
            <person name="Wade C.M."/>
            <person name="Butler J."/>
            <person name="Young S.K."/>
            <person name="Jaffe D.B."/>
            <person name="Calvo S.E."/>
            <person name="Nusbaum C."/>
            <person name="Galagan J.E."/>
            <person name="Birren B.W."/>
        </authorList>
    </citation>
    <scope>NUCLEOTIDE SEQUENCE [LARGE SCALE GENOMIC DNA]</scope>
    <source>
        <strain>DSM 14603 / FGSC 9021 / UM521</strain>
    </source>
</reference>
<reference key="2">
    <citation type="submission" date="2014-09" db="EMBL/GenBank/DDBJ databases">
        <authorList>
            <person name="Gueldener U."/>
            <person name="Muensterkoetter M."/>
            <person name="Walter M.C."/>
            <person name="Mannhaupt G."/>
            <person name="Kahmann R."/>
        </authorList>
    </citation>
    <scope>GENOME REANNOTATION</scope>
    <source>
        <strain>DSM 14603 / FGSC 9021 / UM521</strain>
    </source>
</reference>
<organism>
    <name type="scientific">Mycosarcoma maydis</name>
    <name type="common">Corn smut fungus</name>
    <name type="synonym">Ustilago maydis</name>
    <dbReference type="NCBI Taxonomy" id="5270"/>
    <lineage>
        <taxon>Eukaryota</taxon>
        <taxon>Fungi</taxon>
        <taxon>Dikarya</taxon>
        <taxon>Basidiomycota</taxon>
        <taxon>Ustilaginomycotina</taxon>
        <taxon>Ustilaginomycetes</taxon>
        <taxon>Ustilaginales</taxon>
        <taxon>Ustilaginaceae</taxon>
        <taxon>Mycosarcoma</taxon>
    </lineage>
</organism>
<evidence type="ECO:0000250" key="1"/>
<evidence type="ECO:0000255" key="2"/>
<evidence type="ECO:0000256" key="3">
    <source>
        <dbReference type="SAM" id="MobiDB-lite"/>
    </source>
</evidence>
<evidence type="ECO:0000305" key="4"/>
<accession>Q4PI72</accession>
<accession>A0A0D1E8H9</accession>
<gene>
    <name type="primary">CWC26</name>
    <name type="ORF">UMAG_00191</name>
</gene>